<proteinExistence type="inferred from homology"/>
<organism>
    <name type="scientific">Streptococcus suis (strain 98HAH33)</name>
    <dbReference type="NCBI Taxonomy" id="391296"/>
    <lineage>
        <taxon>Bacteria</taxon>
        <taxon>Bacillati</taxon>
        <taxon>Bacillota</taxon>
        <taxon>Bacilli</taxon>
        <taxon>Lactobacillales</taxon>
        <taxon>Streptococcaceae</taxon>
        <taxon>Streptococcus</taxon>
    </lineage>
</organism>
<evidence type="ECO:0000255" key="1">
    <source>
        <dbReference type="HAMAP-Rule" id="MF_00480"/>
    </source>
</evidence>
<evidence type="ECO:0000305" key="2"/>
<keyword id="KW-0687">Ribonucleoprotein</keyword>
<keyword id="KW-0689">Ribosomal protein</keyword>
<keyword id="KW-0694">RNA-binding</keyword>
<keyword id="KW-0699">rRNA-binding</keyword>
<keyword id="KW-0820">tRNA-binding</keyword>
<sequence length="156" mass="17704">MSRKNQAPKREVLPDPLYNSKLVTRLINRVMLDGKRGTAASIVYGAFDQIKEATGNDALEVFETAMENIMPVLEVRARRVGGSNYQVPVEVRPERRTTLGLRWLVTIARNRGEHTMIDRLAKEIMDAANNTGAAVKKREDTHKMAEANRAFAHFRW</sequence>
<protein>
    <recommendedName>
        <fullName evidence="1">Small ribosomal subunit protein uS7</fullName>
    </recommendedName>
    <alternativeName>
        <fullName evidence="2">30S ribosomal protein S7</fullName>
    </alternativeName>
</protein>
<feature type="chain" id="PRO_1000014304" description="Small ribosomal subunit protein uS7">
    <location>
        <begin position="1"/>
        <end position="156"/>
    </location>
</feature>
<comment type="function">
    <text evidence="1">One of the primary rRNA binding proteins, it binds directly to 16S rRNA where it nucleates assembly of the head domain of the 30S subunit. Is located at the subunit interface close to the decoding center, probably blocks exit of the E-site tRNA.</text>
</comment>
<comment type="subunit">
    <text evidence="1">Part of the 30S ribosomal subunit. Contacts proteins S9 and S11.</text>
</comment>
<comment type="similarity">
    <text evidence="1">Belongs to the universal ribosomal protein uS7 family.</text>
</comment>
<gene>
    <name evidence="1" type="primary">rpsG</name>
    <name type="ordered locus">SSU98_0154</name>
</gene>
<name>RS7_STRS2</name>
<dbReference type="EMBL" id="CP000408">
    <property type="protein sequence ID" value="ABP91314.1"/>
    <property type="molecule type" value="Genomic_DNA"/>
</dbReference>
<dbReference type="SMR" id="A4VYX5"/>
<dbReference type="KEGG" id="ssv:SSU98_0154"/>
<dbReference type="HOGENOM" id="CLU_072226_1_1_9"/>
<dbReference type="GO" id="GO:0015935">
    <property type="term" value="C:small ribosomal subunit"/>
    <property type="evidence" value="ECO:0007669"/>
    <property type="project" value="InterPro"/>
</dbReference>
<dbReference type="GO" id="GO:0019843">
    <property type="term" value="F:rRNA binding"/>
    <property type="evidence" value="ECO:0007669"/>
    <property type="project" value="UniProtKB-UniRule"/>
</dbReference>
<dbReference type="GO" id="GO:0003735">
    <property type="term" value="F:structural constituent of ribosome"/>
    <property type="evidence" value="ECO:0007669"/>
    <property type="project" value="InterPro"/>
</dbReference>
<dbReference type="GO" id="GO:0000049">
    <property type="term" value="F:tRNA binding"/>
    <property type="evidence" value="ECO:0007669"/>
    <property type="project" value="UniProtKB-UniRule"/>
</dbReference>
<dbReference type="GO" id="GO:0006412">
    <property type="term" value="P:translation"/>
    <property type="evidence" value="ECO:0007669"/>
    <property type="project" value="UniProtKB-UniRule"/>
</dbReference>
<dbReference type="CDD" id="cd14869">
    <property type="entry name" value="uS7_Bacteria"/>
    <property type="match status" value="1"/>
</dbReference>
<dbReference type="FunFam" id="1.10.455.10:FF:000001">
    <property type="entry name" value="30S ribosomal protein S7"/>
    <property type="match status" value="1"/>
</dbReference>
<dbReference type="Gene3D" id="1.10.455.10">
    <property type="entry name" value="Ribosomal protein S7 domain"/>
    <property type="match status" value="1"/>
</dbReference>
<dbReference type="HAMAP" id="MF_00480_B">
    <property type="entry name" value="Ribosomal_uS7_B"/>
    <property type="match status" value="1"/>
</dbReference>
<dbReference type="InterPro" id="IPR000235">
    <property type="entry name" value="Ribosomal_uS7"/>
</dbReference>
<dbReference type="InterPro" id="IPR005717">
    <property type="entry name" value="Ribosomal_uS7_bac/org-type"/>
</dbReference>
<dbReference type="InterPro" id="IPR020606">
    <property type="entry name" value="Ribosomal_uS7_CS"/>
</dbReference>
<dbReference type="InterPro" id="IPR023798">
    <property type="entry name" value="Ribosomal_uS7_dom"/>
</dbReference>
<dbReference type="InterPro" id="IPR036823">
    <property type="entry name" value="Ribosomal_uS7_dom_sf"/>
</dbReference>
<dbReference type="NCBIfam" id="TIGR01029">
    <property type="entry name" value="rpsG_bact"/>
    <property type="match status" value="1"/>
</dbReference>
<dbReference type="PANTHER" id="PTHR11205">
    <property type="entry name" value="RIBOSOMAL PROTEIN S7"/>
    <property type="match status" value="1"/>
</dbReference>
<dbReference type="Pfam" id="PF00177">
    <property type="entry name" value="Ribosomal_S7"/>
    <property type="match status" value="1"/>
</dbReference>
<dbReference type="PIRSF" id="PIRSF002122">
    <property type="entry name" value="RPS7p_RPS7a_RPS5e_RPS7o"/>
    <property type="match status" value="1"/>
</dbReference>
<dbReference type="SUPFAM" id="SSF47973">
    <property type="entry name" value="Ribosomal protein S7"/>
    <property type="match status" value="1"/>
</dbReference>
<dbReference type="PROSITE" id="PS00052">
    <property type="entry name" value="RIBOSOMAL_S7"/>
    <property type="match status" value="1"/>
</dbReference>
<accession>A4VYX5</accession>
<reference key="1">
    <citation type="journal article" date="2007" name="PLoS ONE">
        <title>A glimpse of streptococcal toxic shock syndrome from comparative genomics of S. suis 2 Chinese isolates.</title>
        <authorList>
            <person name="Chen C."/>
            <person name="Tang J."/>
            <person name="Dong W."/>
            <person name="Wang C."/>
            <person name="Feng Y."/>
            <person name="Wang J."/>
            <person name="Zheng F."/>
            <person name="Pan X."/>
            <person name="Liu D."/>
            <person name="Li M."/>
            <person name="Song Y."/>
            <person name="Zhu X."/>
            <person name="Sun H."/>
            <person name="Feng T."/>
            <person name="Guo Z."/>
            <person name="Ju A."/>
            <person name="Ge J."/>
            <person name="Dong Y."/>
            <person name="Sun W."/>
            <person name="Jiang Y."/>
            <person name="Wang J."/>
            <person name="Yan J."/>
            <person name="Yang H."/>
            <person name="Wang X."/>
            <person name="Gao G.F."/>
            <person name="Yang R."/>
            <person name="Wang J."/>
            <person name="Yu J."/>
        </authorList>
    </citation>
    <scope>NUCLEOTIDE SEQUENCE [LARGE SCALE GENOMIC DNA]</scope>
    <source>
        <strain>98HAH33</strain>
    </source>
</reference>